<keyword id="KW-0010">Activator</keyword>
<keyword id="KW-0238">DNA-binding</keyword>
<keyword id="KW-0371">Homeobox</keyword>
<keyword id="KW-0539">Nucleus</keyword>
<keyword id="KW-1185">Reference proteome</keyword>
<keyword id="KW-0804">Transcription</keyword>
<keyword id="KW-0805">Transcription regulation</keyword>
<evidence type="ECO:0000250" key="1">
    <source>
        <dbReference type="UniProtKB" id="P28069"/>
    </source>
</evidence>
<evidence type="ECO:0000255" key="2">
    <source>
        <dbReference type="PROSITE-ProRule" id="PRU00108"/>
    </source>
</evidence>
<evidence type="ECO:0000255" key="3">
    <source>
        <dbReference type="PROSITE-ProRule" id="PRU00530"/>
    </source>
</evidence>
<evidence type="ECO:0000305" key="4"/>
<accession>P79364</accession>
<feature type="chain" id="PRO_0000100702" description="Pituitary-specific positive transcription factor 1">
    <location>
        <begin position="1"/>
        <end position="291"/>
    </location>
</feature>
<feature type="domain" description="POU-specific" evidence="3">
    <location>
        <begin position="124"/>
        <end position="198"/>
    </location>
</feature>
<feature type="DNA-binding region" description="Homeobox" evidence="2">
    <location>
        <begin position="214"/>
        <end position="273"/>
    </location>
</feature>
<feature type="short sequence motif" description="9aaTAD" evidence="1">
    <location>
        <begin position="5"/>
        <end position="13"/>
    </location>
</feature>
<sequence>MSCQPFTSTDTFIPLNSESSATLPLIMHPSAAECLPVSNHATNVMSTATGLHYSVPSCHYGNQSSTYGVMAGSLTPCLYEFPDHTLSHGFPPMHQPLLSEDPTAADFKQELRRKSKLIEEPIDMDSPEIRELEKFANEFKVRRIKLGYTQTNVGEALAAVHGSEFSQTTICRFENLQLSFKNACKLKAILFKWLEEAEQVGALYNEKVGANERKRKRRTTISIAAKDALERHFGEQNKPSSQEILRMAEELNLEKEVVRVWFCNRRQREKRVKTSLNQSLFPNSKEHLECR</sequence>
<proteinExistence type="evidence at transcript level"/>
<comment type="function">
    <text evidence="1">Transcription factor involved in the specification of the lactotrope, somatotrope, and thyrotrope phenotypes in the developing anterior pituitary. Activates growth hormone and prolactin genes. Specifically binds to the consensus sequence 5'-TAAAT-3'.</text>
</comment>
<comment type="subunit">
    <text evidence="1">Interacts with PITX1. Interacts with LHX3. Interacts with ELK1.</text>
</comment>
<comment type="subcellular location">
    <subcellularLocation>
        <location evidence="1">Nucleus</location>
    </subcellularLocation>
</comment>
<comment type="domain">
    <text evidence="1">The 9aaTAD motif is a transactivation domain present in a large number of yeast and animal transcription factors.</text>
</comment>
<comment type="similarity">
    <text evidence="4">Belongs to the POU transcription factor family. Class-1 subfamily.</text>
</comment>
<organism>
    <name type="scientific">Ovis aries</name>
    <name type="common">Sheep</name>
    <dbReference type="NCBI Taxonomy" id="9940"/>
    <lineage>
        <taxon>Eukaryota</taxon>
        <taxon>Metazoa</taxon>
        <taxon>Chordata</taxon>
        <taxon>Craniata</taxon>
        <taxon>Vertebrata</taxon>
        <taxon>Euteleostomi</taxon>
        <taxon>Mammalia</taxon>
        <taxon>Eutheria</taxon>
        <taxon>Laurasiatheria</taxon>
        <taxon>Artiodactyla</taxon>
        <taxon>Ruminantia</taxon>
        <taxon>Pecora</taxon>
        <taxon>Bovidae</taxon>
        <taxon>Caprinae</taxon>
        <taxon>Ovis</taxon>
    </lineage>
</organism>
<protein>
    <recommendedName>
        <fullName>Pituitary-specific positive transcription factor 1</fullName>
        <shortName>PIT-1</shortName>
    </recommendedName>
    <alternativeName>
        <fullName>Growth hormone factor 1</fullName>
        <shortName>GHF-1</shortName>
    </alternativeName>
</protein>
<reference key="1">
    <citation type="submission" date="1997-03" db="EMBL/GenBank/DDBJ databases">
        <authorList>
            <person name="Thomas M.G."/>
            <person name="Raymond S.R."/>
            <person name="Carroll J.A."/>
            <person name="Matteri R.L."/>
            <person name="Hillman L."/>
            <person name="Chanetsa F."/>
            <person name="Rozeboom K.J."/>
            <person name="Lipsey R.J."/>
            <person name="Keisler D.H."/>
        </authorList>
    </citation>
    <scope>NUCLEOTIDE SEQUENCE [MRNA]</scope>
</reference>
<name>PIT1_SHEEP</name>
<gene>
    <name type="primary">POU1F1</name>
    <name type="synonym">PIT-1</name>
    <name type="synonym">PIT1</name>
</gene>
<dbReference type="EMBL" id="U88399">
    <property type="protein sequence ID" value="AAB48500.1"/>
    <property type="molecule type" value="mRNA"/>
</dbReference>
<dbReference type="RefSeq" id="NP_001009350.1">
    <property type="nucleotide sequence ID" value="NM_001009350.1"/>
</dbReference>
<dbReference type="SMR" id="P79364"/>
<dbReference type="STRING" id="9940.ENSOARP00000018309"/>
<dbReference type="PaxDb" id="9940-ENSOARP00000018309"/>
<dbReference type="GeneID" id="443370"/>
<dbReference type="KEGG" id="oas:443370"/>
<dbReference type="CTD" id="5449"/>
<dbReference type="eggNOG" id="KOG3802">
    <property type="taxonomic scope" value="Eukaryota"/>
</dbReference>
<dbReference type="OrthoDB" id="6358449at2759"/>
<dbReference type="Proteomes" id="UP000002356">
    <property type="component" value="Unplaced"/>
</dbReference>
<dbReference type="GO" id="GO:0005634">
    <property type="term" value="C:nucleus"/>
    <property type="evidence" value="ECO:0000250"/>
    <property type="project" value="UniProtKB"/>
</dbReference>
<dbReference type="GO" id="GO:0000981">
    <property type="term" value="F:DNA-binding transcription factor activity, RNA polymerase II-specific"/>
    <property type="evidence" value="ECO:0000250"/>
    <property type="project" value="UniProtKB"/>
</dbReference>
<dbReference type="GO" id="GO:0000978">
    <property type="term" value="F:RNA polymerase II cis-regulatory region sequence-specific DNA binding"/>
    <property type="evidence" value="ECO:0007669"/>
    <property type="project" value="TreeGrafter"/>
</dbReference>
<dbReference type="GO" id="GO:0045944">
    <property type="term" value="P:positive regulation of transcription by RNA polymerase II"/>
    <property type="evidence" value="ECO:0000250"/>
    <property type="project" value="UniProtKB"/>
</dbReference>
<dbReference type="CDD" id="cd00086">
    <property type="entry name" value="homeodomain"/>
    <property type="match status" value="1"/>
</dbReference>
<dbReference type="FunFam" id="1.10.10.60:FF:000150">
    <property type="entry name" value="POU domain protein"/>
    <property type="match status" value="1"/>
</dbReference>
<dbReference type="FunFam" id="1.10.260.40:FF:000007">
    <property type="entry name" value="POU domain protein"/>
    <property type="match status" value="1"/>
</dbReference>
<dbReference type="Gene3D" id="1.10.10.60">
    <property type="entry name" value="Homeodomain-like"/>
    <property type="match status" value="1"/>
</dbReference>
<dbReference type="Gene3D" id="1.10.260.40">
    <property type="entry name" value="lambda repressor-like DNA-binding domains"/>
    <property type="match status" value="1"/>
</dbReference>
<dbReference type="InterPro" id="IPR001356">
    <property type="entry name" value="HD"/>
</dbReference>
<dbReference type="InterPro" id="IPR017970">
    <property type="entry name" value="Homeobox_CS"/>
</dbReference>
<dbReference type="InterPro" id="IPR009057">
    <property type="entry name" value="Homeodomain-like_sf"/>
</dbReference>
<dbReference type="InterPro" id="IPR010982">
    <property type="entry name" value="Lambda_DNA-bd_dom_sf"/>
</dbReference>
<dbReference type="InterPro" id="IPR013847">
    <property type="entry name" value="POU"/>
</dbReference>
<dbReference type="InterPro" id="IPR000327">
    <property type="entry name" value="POU_dom"/>
</dbReference>
<dbReference type="InterPro" id="IPR050255">
    <property type="entry name" value="POU_domain_TF"/>
</dbReference>
<dbReference type="PANTHER" id="PTHR11636:SF84">
    <property type="entry name" value="NETRIN-1-RELATED"/>
    <property type="match status" value="1"/>
</dbReference>
<dbReference type="PANTHER" id="PTHR11636">
    <property type="entry name" value="POU DOMAIN"/>
    <property type="match status" value="1"/>
</dbReference>
<dbReference type="Pfam" id="PF00046">
    <property type="entry name" value="Homeodomain"/>
    <property type="match status" value="1"/>
</dbReference>
<dbReference type="Pfam" id="PF00157">
    <property type="entry name" value="Pou"/>
    <property type="match status" value="1"/>
</dbReference>
<dbReference type="PRINTS" id="PR00028">
    <property type="entry name" value="POUDOMAIN"/>
</dbReference>
<dbReference type="SMART" id="SM00389">
    <property type="entry name" value="HOX"/>
    <property type="match status" value="1"/>
</dbReference>
<dbReference type="SMART" id="SM00352">
    <property type="entry name" value="POU"/>
    <property type="match status" value="1"/>
</dbReference>
<dbReference type="SUPFAM" id="SSF46689">
    <property type="entry name" value="Homeodomain-like"/>
    <property type="match status" value="1"/>
</dbReference>
<dbReference type="SUPFAM" id="SSF47413">
    <property type="entry name" value="lambda repressor-like DNA-binding domains"/>
    <property type="match status" value="1"/>
</dbReference>
<dbReference type="PROSITE" id="PS00027">
    <property type="entry name" value="HOMEOBOX_1"/>
    <property type="match status" value="1"/>
</dbReference>
<dbReference type="PROSITE" id="PS50071">
    <property type="entry name" value="HOMEOBOX_2"/>
    <property type="match status" value="1"/>
</dbReference>
<dbReference type="PROSITE" id="PS00035">
    <property type="entry name" value="POU_1"/>
    <property type="match status" value="1"/>
</dbReference>
<dbReference type="PROSITE" id="PS00465">
    <property type="entry name" value="POU_2"/>
    <property type="match status" value="1"/>
</dbReference>
<dbReference type="PROSITE" id="PS51179">
    <property type="entry name" value="POU_3"/>
    <property type="match status" value="1"/>
</dbReference>